<dbReference type="EMBL" id="AB237912">
    <property type="protein sequence ID" value="BAE46690.1"/>
    <property type="molecule type" value="Genomic_DNA"/>
</dbReference>
<dbReference type="RefSeq" id="YP_358714.1">
    <property type="nucleotide sequence ID" value="NC_007500.1"/>
</dbReference>
<dbReference type="SMR" id="Q3C1L9"/>
<dbReference type="GeneID" id="3735078"/>
<dbReference type="KEGG" id="nsy:3735078"/>
<dbReference type="OrthoDB" id="22764at4085"/>
<dbReference type="Proteomes" id="UP000189701">
    <property type="component" value="Chloroplast Pltd"/>
</dbReference>
<dbReference type="GO" id="GO:0009507">
    <property type="term" value="C:chloroplast"/>
    <property type="evidence" value="ECO:0007669"/>
    <property type="project" value="UniProtKB-SubCell"/>
</dbReference>
<dbReference type="GO" id="GO:0022625">
    <property type="term" value="C:cytosolic large ribosomal subunit"/>
    <property type="evidence" value="ECO:0007669"/>
    <property type="project" value="TreeGrafter"/>
</dbReference>
<dbReference type="GO" id="GO:0070180">
    <property type="term" value="F:large ribosomal subunit rRNA binding"/>
    <property type="evidence" value="ECO:0007669"/>
    <property type="project" value="TreeGrafter"/>
</dbReference>
<dbReference type="GO" id="GO:0003735">
    <property type="term" value="F:structural constituent of ribosome"/>
    <property type="evidence" value="ECO:0007669"/>
    <property type="project" value="InterPro"/>
</dbReference>
<dbReference type="GO" id="GO:0006412">
    <property type="term" value="P:translation"/>
    <property type="evidence" value="ECO:0007669"/>
    <property type="project" value="UniProtKB-UniRule"/>
</dbReference>
<dbReference type="CDD" id="cd00337">
    <property type="entry name" value="Ribosomal_uL14"/>
    <property type="match status" value="1"/>
</dbReference>
<dbReference type="FunFam" id="2.40.150.20:FF:000002">
    <property type="entry name" value="50S ribosomal protein L14, chloroplastic"/>
    <property type="match status" value="1"/>
</dbReference>
<dbReference type="Gene3D" id="2.40.150.20">
    <property type="entry name" value="Ribosomal protein L14"/>
    <property type="match status" value="1"/>
</dbReference>
<dbReference type="HAMAP" id="MF_01367">
    <property type="entry name" value="Ribosomal_uL14"/>
    <property type="match status" value="1"/>
</dbReference>
<dbReference type="InterPro" id="IPR000218">
    <property type="entry name" value="Ribosomal_uL14"/>
</dbReference>
<dbReference type="InterPro" id="IPR005745">
    <property type="entry name" value="Ribosomal_uL14_bac-type"/>
</dbReference>
<dbReference type="InterPro" id="IPR019972">
    <property type="entry name" value="Ribosomal_uL14_CS"/>
</dbReference>
<dbReference type="InterPro" id="IPR036853">
    <property type="entry name" value="Ribosomal_uL14_sf"/>
</dbReference>
<dbReference type="NCBIfam" id="TIGR01067">
    <property type="entry name" value="rplN_bact"/>
    <property type="match status" value="1"/>
</dbReference>
<dbReference type="PANTHER" id="PTHR11761">
    <property type="entry name" value="50S/60S RIBOSOMAL PROTEIN L14/L23"/>
    <property type="match status" value="1"/>
</dbReference>
<dbReference type="PANTHER" id="PTHR11761:SF3">
    <property type="entry name" value="LARGE RIBOSOMAL SUBUNIT PROTEIN UL14M"/>
    <property type="match status" value="1"/>
</dbReference>
<dbReference type="Pfam" id="PF00238">
    <property type="entry name" value="Ribosomal_L14"/>
    <property type="match status" value="1"/>
</dbReference>
<dbReference type="SMART" id="SM01374">
    <property type="entry name" value="Ribosomal_L14"/>
    <property type="match status" value="1"/>
</dbReference>
<dbReference type="SUPFAM" id="SSF50193">
    <property type="entry name" value="Ribosomal protein L14"/>
    <property type="match status" value="1"/>
</dbReference>
<dbReference type="PROSITE" id="PS00049">
    <property type="entry name" value="RIBOSOMAL_L14"/>
    <property type="match status" value="1"/>
</dbReference>
<evidence type="ECO:0000255" key="1">
    <source>
        <dbReference type="HAMAP-Rule" id="MF_01367"/>
    </source>
</evidence>
<evidence type="ECO:0000305" key="2"/>
<geneLocation type="chloroplast"/>
<keyword id="KW-0150">Chloroplast</keyword>
<keyword id="KW-0934">Plastid</keyword>
<keyword id="KW-1185">Reference proteome</keyword>
<keyword id="KW-0687">Ribonucleoprotein</keyword>
<keyword id="KW-0689">Ribosomal protein</keyword>
<keyword id="KW-0694">RNA-binding</keyword>
<keyword id="KW-0699">rRNA-binding</keyword>
<proteinExistence type="inferred from homology"/>
<organism>
    <name type="scientific">Nicotiana sylvestris</name>
    <name type="common">Wood tobacco</name>
    <name type="synonym">South American tobacco</name>
    <dbReference type="NCBI Taxonomy" id="4096"/>
    <lineage>
        <taxon>Eukaryota</taxon>
        <taxon>Viridiplantae</taxon>
        <taxon>Streptophyta</taxon>
        <taxon>Embryophyta</taxon>
        <taxon>Tracheophyta</taxon>
        <taxon>Spermatophyta</taxon>
        <taxon>Magnoliopsida</taxon>
        <taxon>eudicotyledons</taxon>
        <taxon>Gunneridae</taxon>
        <taxon>Pentapetalae</taxon>
        <taxon>asterids</taxon>
        <taxon>lamiids</taxon>
        <taxon>Solanales</taxon>
        <taxon>Solanaceae</taxon>
        <taxon>Nicotianoideae</taxon>
        <taxon>Nicotianeae</taxon>
        <taxon>Nicotiana</taxon>
    </lineage>
</organism>
<reference key="1">
    <citation type="journal article" date="2006" name="Mol. Genet. Genomics">
        <title>The chloroplast genome of Nicotiana sylvestris and Nicotiana tomentosiformis: complete sequencing confirms that the Nicotiana sylvestris progenitor is the maternal genome donor of Nicotiana tabacum.</title>
        <authorList>
            <person name="Yukawa M."/>
            <person name="Tsudzuki T."/>
            <person name="Sugiura M."/>
        </authorList>
    </citation>
    <scope>NUCLEOTIDE SEQUENCE [LARGE SCALE GENOMIC DNA]</scope>
</reference>
<sequence length="122" mass="13578">MIQPQTHLNVADNSGARELMCIRIIGASNRRYAHIGDVIVAVIKEAVPNMPLERSEVVRAVIVRTCKELKRDNGMIIRYDDNAAVVIDQEGNPKGTRIFGAIARELRELNFTKIVSLAPEVL</sequence>
<protein>
    <recommendedName>
        <fullName evidence="1">Large ribosomal subunit protein uL14c</fullName>
    </recommendedName>
    <alternativeName>
        <fullName evidence="2">50S ribosomal protein L14, chloroplastic</fullName>
    </alternativeName>
</protein>
<feature type="chain" id="PRO_0000276353" description="Large ribosomal subunit protein uL14c">
    <location>
        <begin position="1"/>
        <end position="122"/>
    </location>
</feature>
<name>RK14_NICSY</name>
<comment type="function">
    <text evidence="1">Binds to 23S rRNA.</text>
</comment>
<comment type="subunit">
    <text evidence="1">Part of the 50S ribosomal subunit.</text>
</comment>
<comment type="subcellular location">
    <subcellularLocation>
        <location>Plastid</location>
        <location>Chloroplast</location>
    </subcellularLocation>
</comment>
<comment type="similarity">
    <text evidence="1">Belongs to the universal ribosomal protein uL14 family.</text>
</comment>
<gene>
    <name evidence="1" type="primary">rpl14</name>
</gene>
<accession>Q3C1L9</accession>